<protein>
    <recommendedName>
        <fullName>Endoribonuclease MazF</fullName>
        <ecNumber>3.1.-.-</ecNumber>
    </recommendedName>
    <alternativeName>
        <fullName>Toxin MazF</fullName>
    </alternativeName>
    <alternativeName>
        <fullName>mRNA interferase MazF</fullName>
    </alternativeName>
</protein>
<name>MAZF_STAS1</name>
<comment type="function">
    <text evidence="1">Toxic component of a type II toxin-antitoxin (TA) system. Ribosome-independent, sequence-specific endoribonuclease that cleaves mRNA, thus inhibiting protein synthesis and inducing bacterial stasis. It cuts between the first and nucleotides of 5'-UACAU-3' in single-stranded RNA. Neutralized by coexpression with cognate antitoxin MazE.</text>
</comment>
<comment type="subunit">
    <text evidence="1">Forms a complex with MazE which is no longer active as an endoribonuclease.</text>
</comment>
<comment type="similarity">
    <text evidence="2">Belongs to the PemK/MazF family.</text>
</comment>
<accession>Q49Z22</accession>
<reference key="1">
    <citation type="journal article" date="2005" name="Proc. Natl. Acad. Sci. U.S.A.">
        <title>Whole genome sequence of Staphylococcus saprophyticus reveals the pathogenesis of uncomplicated urinary tract infection.</title>
        <authorList>
            <person name="Kuroda M."/>
            <person name="Yamashita A."/>
            <person name="Hirakawa H."/>
            <person name="Kumano M."/>
            <person name="Morikawa K."/>
            <person name="Higashide M."/>
            <person name="Maruyama A."/>
            <person name="Inose Y."/>
            <person name="Matoba K."/>
            <person name="Toh H."/>
            <person name="Kuhara S."/>
            <person name="Hattori M."/>
            <person name="Ohta T."/>
        </authorList>
    </citation>
    <scope>NUCLEOTIDE SEQUENCE [LARGE SCALE GENOMIC DNA]</scope>
    <source>
        <strain>ATCC 15305 / DSM 20229 / NCIMB 8711 / NCTC 7292 / S-41</strain>
    </source>
</reference>
<dbReference type="EC" id="3.1.-.-"/>
<dbReference type="EMBL" id="AP008934">
    <property type="protein sequence ID" value="BAE17954.1"/>
    <property type="molecule type" value="Genomic_DNA"/>
</dbReference>
<dbReference type="RefSeq" id="WP_011302703.1">
    <property type="nucleotide sequence ID" value="NZ_MTGA01000032.1"/>
</dbReference>
<dbReference type="SMR" id="Q49Z22"/>
<dbReference type="GeneID" id="3615776"/>
<dbReference type="KEGG" id="ssp:SSP0809"/>
<dbReference type="PATRIC" id="fig|342451.11.peg.811"/>
<dbReference type="eggNOG" id="COG2337">
    <property type="taxonomic scope" value="Bacteria"/>
</dbReference>
<dbReference type="HOGENOM" id="CLU_121823_1_0_9"/>
<dbReference type="OrthoDB" id="9808744at2"/>
<dbReference type="Proteomes" id="UP000006371">
    <property type="component" value="Chromosome"/>
</dbReference>
<dbReference type="GO" id="GO:0003677">
    <property type="term" value="F:DNA binding"/>
    <property type="evidence" value="ECO:0007669"/>
    <property type="project" value="InterPro"/>
</dbReference>
<dbReference type="GO" id="GO:0003723">
    <property type="term" value="F:RNA binding"/>
    <property type="evidence" value="ECO:0007669"/>
    <property type="project" value="UniProtKB-KW"/>
</dbReference>
<dbReference type="GO" id="GO:0004521">
    <property type="term" value="F:RNA endonuclease activity"/>
    <property type="evidence" value="ECO:0007669"/>
    <property type="project" value="TreeGrafter"/>
</dbReference>
<dbReference type="GO" id="GO:0006402">
    <property type="term" value="P:mRNA catabolic process"/>
    <property type="evidence" value="ECO:0007669"/>
    <property type="project" value="TreeGrafter"/>
</dbReference>
<dbReference type="GO" id="GO:0016075">
    <property type="term" value="P:rRNA catabolic process"/>
    <property type="evidence" value="ECO:0007669"/>
    <property type="project" value="TreeGrafter"/>
</dbReference>
<dbReference type="Gene3D" id="2.30.30.110">
    <property type="match status" value="1"/>
</dbReference>
<dbReference type="InterPro" id="IPR003477">
    <property type="entry name" value="PemK-like"/>
</dbReference>
<dbReference type="InterPro" id="IPR011067">
    <property type="entry name" value="Plasmid_toxin/cell-grow_inhib"/>
</dbReference>
<dbReference type="PANTHER" id="PTHR33988:SF2">
    <property type="entry name" value="ENDORIBONUCLEASE MAZF"/>
    <property type="match status" value="1"/>
</dbReference>
<dbReference type="PANTHER" id="PTHR33988">
    <property type="entry name" value="ENDORIBONUCLEASE MAZF-RELATED"/>
    <property type="match status" value="1"/>
</dbReference>
<dbReference type="Pfam" id="PF02452">
    <property type="entry name" value="PemK_toxin"/>
    <property type="match status" value="1"/>
</dbReference>
<dbReference type="PIRSF" id="PIRSF033490">
    <property type="entry name" value="MazF"/>
    <property type="match status" value="1"/>
</dbReference>
<dbReference type="SUPFAM" id="SSF50118">
    <property type="entry name" value="Cell growth inhibitor/plasmid maintenance toxic component"/>
    <property type="match status" value="1"/>
</dbReference>
<gene>
    <name type="primary">mazF</name>
    <name type="ordered locus">SSP0809</name>
</gene>
<keyword id="KW-0255">Endonuclease</keyword>
<keyword id="KW-0378">Hydrolase</keyword>
<keyword id="KW-0540">Nuclease</keyword>
<keyword id="KW-1185">Reference proteome</keyword>
<keyword id="KW-0694">RNA-binding</keyword>
<keyword id="KW-1277">Toxin-antitoxin system</keyword>
<organism>
    <name type="scientific">Staphylococcus saprophyticus subsp. saprophyticus (strain ATCC 15305 / DSM 20229 / NCIMB 8711 / NCTC 7292 / S-41)</name>
    <dbReference type="NCBI Taxonomy" id="342451"/>
    <lineage>
        <taxon>Bacteria</taxon>
        <taxon>Bacillati</taxon>
        <taxon>Bacillota</taxon>
        <taxon>Bacilli</taxon>
        <taxon>Bacillales</taxon>
        <taxon>Staphylococcaceae</taxon>
        <taxon>Staphylococcus</taxon>
    </lineage>
</organism>
<proteinExistence type="inferred from homology"/>
<feature type="chain" id="PRO_0000330709" description="Endoribonuclease MazF">
    <location>
        <begin position="1"/>
        <end position="120"/>
    </location>
</feature>
<evidence type="ECO:0000250" key="1">
    <source>
        <dbReference type="UniProtKB" id="A6QIR4"/>
    </source>
</evidence>
<evidence type="ECO:0000305" key="2"/>
<sequence>MMRRGDVYLADLSPVQGSEQGGIRPVVIIQNDTGNKYSPTVIVAAITGRINKAKIPTHVEIEKSKYKLDKDSVILLEQIRTLDKNRLKEKLTYLSDKKMKEVNNAIDISLGLHTIRSHKA</sequence>